<reference key="1">
    <citation type="journal article" date="2003" name="Proc. Natl. Acad. Sci. U.S.A.">
        <title>Genome sequence of the cyanobacterium Prochlorococcus marinus SS120, a nearly minimal oxyphototrophic genome.</title>
        <authorList>
            <person name="Dufresne A."/>
            <person name="Salanoubat M."/>
            <person name="Partensky F."/>
            <person name="Artiguenave F."/>
            <person name="Axmann I.M."/>
            <person name="Barbe V."/>
            <person name="Duprat S."/>
            <person name="Galperin M.Y."/>
            <person name="Koonin E.V."/>
            <person name="Le Gall F."/>
            <person name="Makarova K.S."/>
            <person name="Ostrowski M."/>
            <person name="Oztas S."/>
            <person name="Robert C."/>
            <person name="Rogozin I.B."/>
            <person name="Scanlan D.J."/>
            <person name="Tandeau de Marsac N."/>
            <person name="Weissenbach J."/>
            <person name="Wincker P."/>
            <person name="Wolf Y.I."/>
            <person name="Hess W.R."/>
        </authorList>
    </citation>
    <scope>NUCLEOTIDE SEQUENCE [LARGE SCALE GENOMIC DNA]</scope>
    <source>
        <strain>SARG / CCMP1375 / SS120</strain>
    </source>
</reference>
<comment type="function">
    <text evidence="1">Required for accurate and efficient protein synthesis under certain stress conditions. May act as a fidelity factor of the translation reaction, by catalyzing a one-codon backward translocation of tRNAs on improperly translocated ribosomes. Back-translocation proceeds from a post-translocation (POST) complex to a pre-translocation (PRE) complex, thus giving elongation factor G a second chance to translocate the tRNAs correctly. Binds to ribosomes in a GTP-dependent manner.</text>
</comment>
<comment type="catalytic activity">
    <reaction evidence="1">
        <text>GTP + H2O = GDP + phosphate + H(+)</text>
        <dbReference type="Rhea" id="RHEA:19669"/>
        <dbReference type="ChEBI" id="CHEBI:15377"/>
        <dbReference type="ChEBI" id="CHEBI:15378"/>
        <dbReference type="ChEBI" id="CHEBI:37565"/>
        <dbReference type="ChEBI" id="CHEBI:43474"/>
        <dbReference type="ChEBI" id="CHEBI:58189"/>
        <dbReference type="EC" id="3.6.5.n1"/>
    </reaction>
</comment>
<comment type="subcellular location">
    <subcellularLocation>
        <location evidence="1">Cell inner membrane</location>
        <topology evidence="1">Peripheral membrane protein</topology>
        <orientation evidence="1">Cytoplasmic side</orientation>
    </subcellularLocation>
</comment>
<comment type="similarity">
    <text evidence="1">Belongs to the TRAFAC class translation factor GTPase superfamily. Classic translation factor GTPase family. LepA subfamily.</text>
</comment>
<keyword id="KW-0997">Cell inner membrane</keyword>
<keyword id="KW-1003">Cell membrane</keyword>
<keyword id="KW-0342">GTP-binding</keyword>
<keyword id="KW-0378">Hydrolase</keyword>
<keyword id="KW-0472">Membrane</keyword>
<keyword id="KW-0547">Nucleotide-binding</keyword>
<keyword id="KW-0648">Protein biosynthesis</keyword>
<keyword id="KW-1185">Reference proteome</keyword>
<gene>
    <name evidence="1" type="primary">lepA</name>
    <name type="ordered locus">Pro_0419</name>
</gene>
<name>LEPA_PROMA</name>
<dbReference type="EC" id="3.6.5.n1" evidence="1"/>
<dbReference type="EMBL" id="AE017126">
    <property type="protein sequence ID" value="AAP99465.1"/>
    <property type="molecule type" value="Genomic_DNA"/>
</dbReference>
<dbReference type="RefSeq" id="NP_874813.1">
    <property type="nucleotide sequence ID" value="NC_005042.1"/>
</dbReference>
<dbReference type="RefSeq" id="WP_011124574.1">
    <property type="nucleotide sequence ID" value="NC_005042.1"/>
</dbReference>
<dbReference type="SMR" id="Q7VDF7"/>
<dbReference type="STRING" id="167539.Pro_0419"/>
<dbReference type="EnsemblBacteria" id="AAP99465">
    <property type="protein sequence ID" value="AAP99465"/>
    <property type="gene ID" value="Pro_0419"/>
</dbReference>
<dbReference type="KEGG" id="pma:Pro_0419"/>
<dbReference type="PATRIC" id="fig|167539.5.peg.428"/>
<dbReference type="eggNOG" id="COG0481">
    <property type="taxonomic scope" value="Bacteria"/>
</dbReference>
<dbReference type="HOGENOM" id="CLU_009995_3_3_3"/>
<dbReference type="OrthoDB" id="580826at2"/>
<dbReference type="Proteomes" id="UP000001420">
    <property type="component" value="Chromosome"/>
</dbReference>
<dbReference type="GO" id="GO:0005886">
    <property type="term" value="C:plasma membrane"/>
    <property type="evidence" value="ECO:0007669"/>
    <property type="project" value="UniProtKB-SubCell"/>
</dbReference>
<dbReference type="GO" id="GO:0005525">
    <property type="term" value="F:GTP binding"/>
    <property type="evidence" value="ECO:0007669"/>
    <property type="project" value="UniProtKB-KW"/>
</dbReference>
<dbReference type="GO" id="GO:0003924">
    <property type="term" value="F:GTPase activity"/>
    <property type="evidence" value="ECO:0007669"/>
    <property type="project" value="InterPro"/>
</dbReference>
<dbReference type="GO" id="GO:0043022">
    <property type="term" value="F:ribosome binding"/>
    <property type="evidence" value="ECO:0007669"/>
    <property type="project" value="TreeGrafter"/>
</dbReference>
<dbReference type="GO" id="GO:0045727">
    <property type="term" value="P:positive regulation of translation"/>
    <property type="evidence" value="ECO:0007669"/>
    <property type="project" value="TreeGrafter"/>
</dbReference>
<dbReference type="GO" id="GO:0006412">
    <property type="term" value="P:translation"/>
    <property type="evidence" value="ECO:0007669"/>
    <property type="project" value="UniProtKB-KW"/>
</dbReference>
<dbReference type="CDD" id="cd03699">
    <property type="entry name" value="EF4_II"/>
    <property type="match status" value="1"/>
</dbReference>
<dbReference type="CDD" id="cd16260">
    <property type="entry name" value="EF4_III"/>
    <property type="match status" value="1"/>
</dbReference>
<dbReference type="CDD" id="cd01890">
    <property type="entry name" value="LepA"/>
    <property type="match status" value="1"/>
</dbReference>
<dbReference type="CDD" id="cd03709">
    <property type="entry name" value="lepA_C"/>
    <property type="match status" value="1"/>
</dbReference>
<dbReference type="FunFam" id="3.40.50.300:FF:000078">
    <property type="entry name" value="Elongation factor 4"/>
    <property type="match status" value="1"/>
</dbReference>
<dbReference type="FunFam" id="2.40.30.10:FF:000015">
    <property type="entry name" value="Translation factor GUF1, mitochondrial"/>
    <property type="match status" value="1"/>
</dbReference>
<dbReference type="FunFam" id="3.30.70.240:FF:000007">
    <property type="entry name" value="Translation factor GUF1, mitochondrial"/>
    <property type="match status" value="1"/>
</dbReference>
<dbReference type="FunFam" id="3.30.70.2570:FF:000001">
    <property type="entry name" value="Translation factor GUF1, mitochondrial"/>
    <property type="match status" value="1"/>
</dbReference>
<dbReference type="FunFam" id="3.30.70.870:FF:000004">
    <property type="entry name" value="Translation factor GUF1, mitochondrial"/>
    <property type="match status" value="1"/>
</dbReference>
<dbReference type="Gene3D" id="3.30.70.240">
    <property type="match status" value="1"/>
</dbReference>
<dbReference type="Gene3D" id="3.30.70.2570">
    <property type="entry name" value="Elongation factor 4, C-terminal domain"/>
    <property type="match status" value="1"/>
</dbReference>
<dbReference type="Gene3D" id="3.30.70.870">
    <property type="entry name" value="Elongation Factor G (Translational Gtpase), domain 3"/>
    <property type="match status" value="1"/>
</dbReference>
<dbReference type="Gene3D" id="3.40.50.300">
    <property type="entry name" value="P-loop containing nucleotide triphosphate hydrolases"/>
    <property type="match status" value="1"/>
</dbReference>
<dbReference type="Gene3D" id="2.40.30.10">
    <property type="entry name" value="Translation factors"/>
    <property type="match status" value="1"/>
</dbReference>
<dbReference type="HAMAP" id="MF_03138">
    <property type="entry name" value="GUFP"/>
    <property type="match status" value="1"/>
</dbReference>
<dbReference type="HAMAP" id="MF_00071">
    <property type="entry name" value="LepA"/>
    <property type="match status" value="1"/>
</dbReference>
<dbReference type="InterPro" id="IPR006297">
    <property type="entry name" value="EF-4"/>
</dbReference>
<dbReference type="InterPro" id="IPR035647">
    <property type="entry name" value="EFG_III/V"/>
</dbReference>
<dbReference type="InterPro" id="IPR000640">
    <property type="entry name" value="EFG_V-like"/>
</dbReference>
<dbReference type="InterPro" id="IPR004161">
    <property type="entry name" value="EFTu-like_2"/>
</dbReference>
<dbReference type="InterPro" id="IPR031157">
    <property type="entry name" value="G_TR_CS"/>
</dbReference>
<dbReference type="InterPro" id="IPR027518">
    <property type="entry name" value="GUFP"/>
</dbReference>
<dbReference type="InterPro" id="IPR038363">
    <property type="entry name" value="LepA_C_sf"/>
</dbReference>
<dbReference type="InterPro" id="IPR013842">
    <property type="entry name" value="LepA_CTD"/>
</dbReference>
<dbReference type="InterPro" id="IPR035654">
    <property type="entry name" value="LepA_IV"/>
</dbReference>
<dbReference type="InterPro" id="IPR027417">
    <property type="entry name" value="P-loop_NTPase"/>
</dbReference>
<dbReference type="InterPro" id="IPR005225">
    <property type="entry name" value="Small_GTP-bd"/>
</dbReference>
<dbReference type="InterPro" id="IPR000795">
    <property type="entry name" value="T_Tr_GTP-bd_dom"/>
</dbReference>
<dbReference type="InterPro" id="IPR009000">
    <property type="entry name" value="Transl_B-barrel_sf"/>
</dbReference>
<dbReference type="NCBIfam" id="TIGR01393">
    <property type="entry name" value="lepA"/>
    <property type="match status" value="1"/>
</dbReference>
<dbReference type="NCBIfam" id="TIGR00231">
    <property type="entry name" value="small_GTP"/>
    <property type="match status" value="1"/>
</dbReference>
<dbReference type="PANTHER" id="PTHR43512:SF4">
    <property type="entry name" value="TRANSLATION FACTOR GUF1 HOMOLOG, CHLOROPLASTIC"/>
    <property type="match status" value="1"/>
</dbReference>
<dbReference type="PANTHER" id="PTHR43512">
    <property type="entry name" value="TRANSLATION FACTOR GUF1-RELATED"/>
    <property type="match status" value="1"/>
</dbReference>
<dbReference type="Pfam" id="PF00679">
    <property type="entry name" value="EFG_C"/>
    <property type="match status" value="1"/>
</dbReference>
<dbReference type="Pfam" id="PF00009">
    <property type="entry name" value="GTP_EFTU"/>
    <property type="match status" value="1"/>
</dbReference>
<dbReference type="Pfam" id="PF03144">
    <property type="entry name" value="GTP_EFTU_D2"/>
    <property type="match status" value="1"/>
</dbReference>
<dbReference type="Pfam" id="PF06421">
    <property type="entry name" value="LepA_C"/>
    <property type="match status" value="1"/>
</dbReference>
<dbReference type="PRINTS" id="PR00315">
    <property type="entry name" value="ELONGATNFCT"/>
</dbReference>
<dbReference type="SMART" id="SM00838">
    <property type="entry name" value="EFG_C"/>
    <property type="match status" value="1"/>
</dbReference>
<dbReference type="SUPFAM" id="SSF54980">
    <property type="entry name" value="EF-G C-terminal domain-like"/>
    <property type="match status" value="2"/>
</dbReference>
<dbReference type="SUPFAM" id="SSF52540">
    <property type="entry name" value="P-loop containing nucleoside triphosphate hydrolases"/>
    <property type="match status" value="1"/>
</dbReference>
<dbReference type="SUPFAM" id="SSF50447">
    <property type="entry name" value="Translation proteins"/>
    <property type="match status" value="1"/>
</dbReference>
<dbReference type="PROSITE" id="PS00301">
    <property type="entry name" value="G_TR_1"/>
    <property type="match status" value="1"/>
</dbReference>
<dbReference type="PROSITE" id="PS51722">
    <property type="entry name" value="G_TR_2"/>
    <property type="match status" value="1"/>
</dbReference>
<accession>Q7VDF7</accession>
<proteinExistence type="inferred from homology"/>
<evidence type="ECO:0000255" key="1">
    <source>
        <dbReference type="HAMAP-Rule" id="MF_00071"/>
    </source>
</evidence>
<feature type="chain" id="PRO_0000176320" description="Elongation factor 4">
    <location>
        <begin position="1"/>
        <end position="602"/>
    </location>
</feature>
<feature type="domain" description="tr-type G">
    <location>
        <begin position="7"/>
        <end position="189"/>
    </location>
</feature>
<feature type="binding site" evidence="1">
    <location>
        <begin position="19"/>
        <end position="24"/>
    </location>
    <ligand>
        <name>GTP</name>
        <dbReference type="ChEBI" id="CHEBI:37565"/>
    </ligand>
</feature>
<feature type="binding site" evidence="1">
    <location>
        <begin position="136"/>
        <end position="139"/>
    </location>
    <ligand>
        <name>GTP</name>
        <dbReference type="ChEBI" id="CHEBI:37565"/>
    </ligand>
</feature>
<organism>
    <name type="scientific">Prochlorococcus marinus (strain SARG / CCMP1375 / SS120)</name>
    <dbReference type="NCBI Taxonomy" id="167539"/>
    <lineage>
        <taxon>Bacteria</taxon>
        <taxon>Bacillati</taxon>
        <taxon>Cyanobacteriota</taxon>
        <taxon>Cyanophyceae</taxon>
        <taxon>Synechococcales</taxon>
        <taxon>Prochlorococcaceae</taxon>
        <taxon>Prochlorococcus</taxon>
    </lineage>
</organism>
<protein>
    <recommendedName>
        <fullName evidence="1">Elongation factor 4</fullName>
        <shortName evidence="1">EF-4</shortName>
        <ecNumber evidence="1">3.6.5.n1</ecNumber>
    </recommendedName>
    <alternativeName>
        <fullName evidence="1">Ribosomal back-translocase LepA</fullName>
    </alternativeName>
</protein>
<sequence>MTDIPVARLRNFCIIAHIDHGKSTLADRLLQETGTVSSRDMQEQFLDNMDLERERGITIKLQAARMNYCASDGEQYVLNLIDTPGHVDFSYEVSRSLQACEGALLVVDASQGVEAQTLANVYLALENDLEIIPVLNKVDLPGADSERIKQEIESIIGLDTSTAIECSAKTGIGIPEILQSVVDRIPPPKDLLNDPTKALIFDSYYDSYRGVIVYFRVMTGSISRRDKILLMASRKSYELDEIGIMSPDQRKVEDLHAGEVGYLSASIKAVADARVGDTITLVDDSASEPLPGYTEAKPMVFCGLFPTDADQYPDLREALDKLQLSDAALKYEPETSSAMGFGFRCGFLGLLHMEIVQERLEREYDLDLIVTAPSVIYQVNMIGGETLLIDNPATLPDPQKRESIEEPYVRIEIYAPNEYNGTLMGLCQDRRGDFVDMKFITTDRVTLIYEIPLAEVVTDFFDHMKSRTKGYASMEYHLIGYRENDLVRLDVLINAERADPLTTIVHREKAYGVGRGLVEKLKELIPKQQFKIPLQASIGSRIIASESISALRKDVLAKCYGGDISRKKKLLKKQAKGKKRMKSMGKVDVPQEAFMAVLKLNQ</sequence>